<organism>
    <name type="scientific">Murid herpesvirus 4</name>
    <name type="common">MuHV-4</name>
    <name type="synonym">Murine gammaherpesvirus 68</name>
    <dbReference type="NCBI Taxonomy" id="33708"/>
    <lineage>
        <taxon>Viruses</taxon>
        <taxon>Duplodnaviria</taxon>
        <taxon>Heunggongvirae</taxon>
        <taxon>Peploviricota</taxon>
        <taxon>Herviviricetes</taxon>
        <taxon>Herpesvirales</taxon>
        <taxon>Orthoherpesviridae</taxon>
        <taxon>Gammaherpesvirinae</taxon>
        <taxon>Rhadinovirus</taxon>
        <taxon>Rhadinovirus muridgamma4</taxon>
    </lineage>
</organism>
<comment type="function">
    <text evidence="1 2 3 4 5">Plays a role in the protection against apoptosis mediated by cytotoxic cells during the immune response to acute and persistent viral infection. Contributes therefore to latency establishment. Plays also a role in the inhibition of host starvation-induced autophagy which ultimately contributes to the viral chronic infection.</text>
</comment>
<comment type="subunit">
    <text evidence="4 5">Interacts with host BECN1; this interaction inhibits host autophagy. Interacts with host BAK1 and BAX.</text>
</comment>
<comment type="interaction">
    <interactant intactId="EBI-8849581">
        <id>P89884</id>
    </interactant>
    <interactant intactId="EBI-949378">
        <id>Q14457</id>
        <label>BECN1</label>
    </interactant>
    <organismsDiffer>true</organismsDiffer>
    <experiments>4</experiments>
</comment>
<comment type="subcellular location">
    <subcellularLocation>
        <location evidence="3 4 5">Host cytoplasm</location>
    </subcellularLocation>
</comment>
<feature type="chain" id="PRO_0000443226" description="Apoptosis regulator Bcl-2 homolog">
    <location>
        <begin position="1"/>
        <end position="171"/>
    </location>
</feature>
<feature type="disulfide bond" description="Interchain (with C-104)">
    <location>
        <position position="29"/>
    </location>
</feature>
<feature type="disulfide bond" description="Interchain (with C-29)">
    <location>
        <position position="104"/>
    </location>
</feature>
<feature type="helix" evidence="7">
    <location>
        <begin position="7"/>
        <end position="22"/>
    </location>
</feature>
<feature type="helix" evidence="7">
    <location>
        <begin position="27"/>
        <end position="29"/>
    </location>
</feature>
<feature type="helix" evidence="7">
    <location>
        <begin position="32"/>
        <end position="55"/>
    </location>
</feature>
<feature type="turn" evidence="7">
    <location>
        <begin position="61"/>
        <end position="63"/>
    </location>
</feature>
<feature type="helix" evidence="7">
    <location>
        <begin position="64"/>
        <end position="66"/>
    </location>
</feature>
<feature type="helix" evidence="7">
    <location>
        <begin position="67"/>
        <end position="80"/>
    </location>
</feature>
<feature type="helix" evidence="7">
    <location>
        <begin position="85"/>
        <end position="101"/>
    </location>
</feature>
<feature type="strand" evidence="6">
    <location>
        <begin position="105"/>
        <end position="107"/>
    </location>
</feature>
<feature type="helix" evidence="7">
    <location>
        <begin position="110"/>
        <end position="125"/>
    </location>
</feature>
<feature type="helix" evidence="7">
    <location>
        <begin position="128"/>
        <end position="131"/>
    </location>
</feature>
<keyword id="KW-0002">3D-structure</keyword>
<keyword id="KW-1015">Disulfide bond</keyword>
<keyword id="KW-1035">Host cytoplasm</keyword>
<keyword id="KW-0945">Host-virus interaction</keyword>
<keyword id="KW-1081">Inhibition of host apoptosis by viral BCL2-like protein</keyword>
<keyword id="KW-1083">Inhibition of host autophagy by virus</keyword>
<keyword id="KW-1119">Modulation of host cell apoptosis by virus</keyword>
<keyword id="KW-1185">Reference proteome</keyword>
<evidence type="ECO:0000269" key="1">
    <source>
    </source>
</evidence>
<evidence type="ECO:0000269" key="2">
    <source>
    </source>
</evidence>
<evidence type="ECO:0000269" key="3">
    <source>
    </source>
</evidence>
<evidence type="ECO:0000269" key="4">
    <source>
    </source>
</evidence>
<evidence type="ECO:0000269" key="5">
    <source>
    </source>
</evidence>
<evidence type="ECO:0007829" key="6">
    <source>
        <dbReference type="PDB" id="2ABO"/>
    </source>
</evidence>
<evidence type="ECO:0007829" key="7">
    <source>
        <dbReference type="PDB" id="4MI8"/>
    </source>
</evidence>
<gene>
    <name type="primary">vBCL2</name>
</gene>
<dbReference type="EMBL" id="U91858">
    <property type="protein sequence ID" value="AAB50016.1"/>
    <property type="molecule type" value="Genomic_DNA"/>
</dbReference>
<dbReference type="EMBL" id="U97553">
    <property type="protein sequence ID" value="AAB66423.1"/>
    <property type="molecule type" value="Genomic_DNA"/>
</dbReference>
<dbReference type="EMBL" id="AF105037">
    <property type="protein sequence ID" value="AAF19336.1"/>
    <property type="molecule type" value="Genomic_DNA"/>
</dbReference>
<dbReference type="EMBL" id="GQ421301">
    <property type="protein sequence ID" value="ACV65512.1"/>
    <property type="molecule type" value="Genomic_DNA"/>
</dbReference>
<dbReference type="PDB" id="2ABO">
    <property type="method" value="NMR"/>
    <property type="chains" value="A=1-136"/>
</dbReference>
<dbReference type="PDB" id="3BL2">
    <property type="method" value="X-ray"/>
    <property type="resolution" value="2.30 A"/>
    <property type="chains" value="A/B=5-135"/>
</dbReference>
<dbReference type="PDB" id="3DVU">
    <property type="method" value="X-ray"/>
    <property type="resolution" value="2.50 A"/>
    <property type="chains" value="A/B=2-136"/>
</dbReference>
<dbReference type="PDB" id="4MI8">
    <property type="method" value="X-ray"/>
    <property type="resolution" value="2.10 A"/>
    <property type="chains" value="A/B=2-136"/>
</dbReference>
<dbReference type="PDBsum" id="2ABO"/>
<dbReference type="PDBsum" id="3BL2"/>
<dbReference type="PDBsum" id="3DVU"/>
<dbReference type="PDBsum" id="4MI8"/>
<dbReference type="SMR" id="P89884"/>
<dbReference type="DIP" id="DIP-47218N"/>
<dbReference type="IntAct" id="P89884">
    <property type="interactions" value="13"/>
</dbReference>
<dbReference type="MINT" id="P89884"/>
<dbReference type="KEGG" id="vg:1497180"/>
<dbReference type="EvolutionaryTrace" id="P89884"/>
<dbReference type="Proteomes" id="UP000099649">
    <property type="component" value="Genome"/>
</dbReference>
<dbReference type="Proteomes" id="UP000175018">
    <property type="component" value="Genome"/>
</dbReference>
<dbReference type="GO" id="GO:0030430">
    <property type="term" value="C:host cell cytoplasm"/>
    <property type="evidence" value="ECO:0007669"/>
    <property type="project" value="UniProtKB-SubCell"/>
</dbReference>
<dbReference type="GO" id="GO:0042981">
    <property type="term" value="P:regulation of apoptotic process"/>
    <property type="evidence" value="ECO:0007669"/>
    <property type="project" value="InterPro"/>
</dbReference>
<dbReference type="GO" id="GO:0033668">
    <property type="term" value="P:symbiont-mediated suppression of host apoptosis"/>
    <property type="evidence" value="ECO:0007669"/>
    <property type="project" value="UniProtKB-KW"/>
</dbReference>
<dbReference type="GO" id="GO:0140321">
    <property type="term" value="P:symbiont-mediated suppression of host autophagy"/>
    <property type="evidence" value="ECO:0007669"/>
    <property type="project" value="UniProtKB-KW"/>
</dbReference>
<dbReference type="Gene3D" id="1.10.437.10">
    <property type="entry name" value="Blc2-like"/>
    <property type="match status" value="1"/>
</dbReference>
<dbReference type="InterPro" id="IPR029450">
    <property type="entry name" value="Apo_reg_M11"/>
</dbReference>
<dbReference type="InterPro" id="IPR036834">
    <property type="entry name" value="Bcl-2-like_sf"/>
</dbReference>
<dbReference type="Pfam" id="PF15286">
    <property type="entry name" value="Bcl-2_3"/>
    <property type="match status" value="1"/>
</dbReference>
<dbReference type="SUPFAM" id="SSF56854">
    <property type="entry name" value="Bcl-2 inhibitors of programmed cell death"/>
    <property type="match status" value="1"/>
</dbReference>
<proteinExistence type="evidence at protein level"/>
<protein>
    <recommendedName>
        <fullName>Apoptosis regulator Bcl-2 homolog</fullName>
        <shortName>vBcl-2</shortName>
    </recommendedName>
    <alternativeName>
        <fullName>Protein M11</fullName>
    </alternativeName>
</protein>
<name>ARBH_MHV68</name>
<organismHost>
    <name type="scientific">Apodemus sylvaticus</name>
    <name type="common">European woodmouse</name>
    <dbReference type="NCBI Taxonomy" id="10129"/>
</organismHost>
<sequence>MSHKKSGTYWATLITAFLKTVSKVEELDCVDSAVLVDVSKIITLTQEFRRHYDSVYRADYGPALKNWKRDLSKLFTSLFVDVINSGRIVGFFDVGRYVCEEVLCPGSWTEDHELLNDCMTHFFIENNLMNHFPLEDIFLAQRKFQTTGFTFLLHALAKVLPRIYSGNVIYV</sequence>
<accession>P89884</accession>
<reference key="1">
    <citation type="journal article" date="1994" name="J. Virol.">
        <title>Characterization of murine gammaherpesvirus 68 glycoprotein B (gB) homolog: similarity to Epstein-Barr virus gB (gp110).</title>
        <authorList>
            <person name="Stewart J.P."/>
            <person name="Janjua N.J."/>
            <person name="Sunil-Chandra N.P."/>
            <person name="Nash A.A."/>
            <person name="Arrand J.R."/>
        </authorList>
    </citation>
    <scope>NUCLEOTIDE SEQUENCE [LARGE SCALE GENOMIC DNA]</scope>
</reference>
<reference key="2">
    <citation type="journal article" date="1996" name="J. Virol.">
        <title>Identification and characterization of murine gammaherpesvirus 68 gp150: a virion membrane glycoprotein.</title>
        <authorList>
            <person name="Stewart J.P."/>
            <person name="Janjua N.J."/>
            <person name="Pepper S.D."/>
            <person name="Bennion G."/>
            <person name="Mackett M."/>
            <person name="Allen T."/>
            <person name="Nash A.A."/>
            <person name="Arrand J.R."/>
        </authorList>
    </citation>
    <scope>NUCLEOTIDE SEQUENCE [LARGE SCALE GENOMIC DNA]</scope>
</reference>
<reference key="3">
    <citation type="journal article" date="1996" name="Virology">
        <title>Murine gammaherpesvirus-68 encodes homologues of thymidine kinase and glycoprotein H: sequence, expression, and characterization of pyrimidine kinase activity.</title>
        <authorList>
            <person name="Pepper S.D."/>
            <person name="Stewart J.P."/>
            <person name="Arrand J.R."/>
            <person name="Mackett M."/>
        </authorList>
    </citation>
    <scope>NUCLEOTIDE SEQUENCE [LARGE SCALE GENOMIC DNA]</scope>
</reference>
<reference key="4">
    <citation type="journal article" date="1997" name="J. Gen. Virol.">
        <title>Genetic content and preliminary transcriptional analysis of a representative region of murine gammaherpesvirus 68.</title>
        <authorList>
            <person name="Mackett M."/>
            <person name="Stewart J.P."/>
            <person name="de V Pepper S."/>
            <person name="Chee M."/>
            <person name="Efstathiou S."/>
            <person name="Nash A.A."/>
            <person name="Arrand J.R."/>
        </authorList>
    </citation>
    <scope>NUCLEOTIDE SEQUENCE [LARGE SCALE GENOMIC DNA]</scope>
    <source>
        <strain>G2.4</strain>
    </source>
</reference>
<reference key="5">
    <citation type="journal article" date="1997" name="J. Gen. Virol.">
        <title>Murine gammaherpesvirus 68 encodes tRNA-like sequences which are expressed during latency.</title>
        <authorList>
            <person name="Bowden R.J."/>
            <person name="Simas J.P."/>
            <person name="Davis A.J."/>
            <person name="Efstathiou S."/>
        </authorList>
    </citation>
    <scope>NUCLEOTIDE SEQUENCE [LARGE SCALE GENOMIC DNA]</scope>
</reference>
<reference key="6">
    <citation type="journal article" date="1997" name="J. Virol.">
        <title>Complete sequence and genomic analysis of murine gammaherpesvirus 68.</title>
        <authorList>
            <person name="Virgin H.W."/>
            <person name="Latreille P."/>
            <person name="Wamsley P."/>
            <person name="Hallsworth K."/>
            <person name="Weck K.E."/>
            <person name="Dal Canto A.J."/>
            <person name="Speck S.H."/>
        </authorList>
    </citation>
    <scope>NUCLEOTIDE SEQUENCE [LARGE SCALE GENOMIC DNA]</scope>
    <source>
        <strain>G2.4</strain>
    </source>
</reference>
<reference key="7">
    <citation type="journal article" date="1999" name="J. Gen. Virol.">
        <title>The murine gammaherpesvirus-68 M11 protein inhibits Fas- and TNF-induced apoptosis.</title>
        <authorList>
            <person name="Wang G.H."/>
            <person name="Garvey T.L."/>
            <person name="Cohen J.I."/>
        </authorList>
    </citation>
    <scope>FUNCTION</scope>
</reference>
<reference key="8">
    <citation type="journal article" date="2000" name="Arch. Virol.">
        <title>Murine gammaherpesvirus M11 gene product inhibits apoptosis and is expressed during virus persistence.</title>
        <authorList>
            <person name="Roy D.J."/>
            <person name="Ebrahimi B.C."/>
            <person name="Dutia B.M."/>
            <person name="Nash A.A."/>
            <person name="Stewart J.P."/>
        </authorList>
    </citation>
    <scope>FUNCTION</scope>
</reference>
<reference key="9">
    <citation type="journal article" date="2005" name="J. Gen. Virol.">
        <title>Murine gammaherpesvirus 68 bcl-2 homologue contributes to latency establishment in vivo.</title>
        <authorList>
            <person name="de Lima B.D."/>
            <person name="May J.S."/>
            <person name="Marques S."/>
            <person name="Simas J.P."/>
            <person name="Stevenson P.G."/>
        </authorList>
    </citation>
    <scope>FUNCTION</scope>
    <scope>SUBCELLULAR LOCATION</scope>
</reference>
<reference key="10">
    <citation type="journal article" date="2005" name="PLoS Pathog.">
        <title>A surface groove essential for viral Bcl-2 function during chronic infection in vivo.</title>
        <authorList>
            <person name="Loh J."/>
            <person name="Huang Q."/>
            <person name="Petros A.M."/>
            <person name="Nettesheim D."/>
            <person name="van Dyk L.F."/>
            <person name="Labrada L."/>
            <person name="Speck S.H."/>
            <person name="Levine B."/>
            <person name="Olejniczak E.T."/>
            <person name="Virgin H.W."/>
        </authorList>
    </citation>
    <scope>STRUCTURE BY NMR OF 1-136</scope>
</reference>
<reference key="11">
    <citation type="journal article" date="2008" name="Autophagy">
        <title>Molecular basis of the regulation of Beclin 1-dependent autophagy by the gamma-herpesvirus 68 Bcl-2 homolog M11.</title>
        <authorList>
            <person name="Sinha S."/>
            <person name="Colbert C.L."/>
            <person name="Becker N."/>
            <person name="Wei Y."/>
            <person name="Levine B."/>
        </authorList>
    </citation>
    <scope>X-RAY CRYSTALLOGRAPHY (2.50 ANGSTROMS) OF 2-136</scope>
    <scope>INTERACTION WITH HOST BECN1</scope>
    <scope>FUNCTION</scope>
    <scope>SUBCELLULAR LOCATION</scope>
    <scope>DISULFIDE BOND</scope>
</reference>
<reference key="12">
    <citation type="journal article" date="2008" name="PLoS Pathog.">
        <title>Structural and biochemical bases for the inhibition of autophagy and apoptosis by viral BCL-2 of murine gamma-herpesvirus 68.</title>
        <authorList>
            <person name="Ku B."/>
            <person name="Woo J.S."/>
            <person name="Liang C."/>
            <person name="Lee K.H."/>
            <person name="Hong H.S."/>
            <person name="E X."/>
            <person name="Kim K.S."/>
            <person name="Jung J.U."/>
            <person name="Oh B.H."/>
        </authorList>
    </citation>
    <scope>X-RAY CRYSTALLOGRAPHY (2.30 ANGSTROMS) OF 5-135</scope>
    <scope>FUNCTION</scope>
    <scope>SUBCELLULAR LOCATION</scope>
    <scope>INTERACTION WITH BECN1; BAX AND BAK</scope>
</reference>
<reference key="13">
    <citation type="journal article" date="2014" name="J. Biol. Chem.">
        <title>Targeting gamma-herpesvirus 68 Bcl-2-mediated down-regulation of autophagy.</title>
        <authorList>
            <person name="Su M."/>
            <person name="Mei Y."/>
            <person name="Sanishvili R."/>
            <person name="Levine B."/>
            <person name="Colbert C.L."/>
            <person name="Sinha S."/>
        </authorList>
    </citation>
    <scope>X-RAY CRYSTALLOGRAPHY (2.10 ANGSTROMS) OF 2-136</scope>
    <scope>DISULFIDE BONDS</scope>
</reference>